<gene>
    <name evidence="11" type="primary">Asah1</name>
    <name type="synonym">Asah</name>
</gene>
<dbReference type="EC" id="3.5.1.23" evidence="8"/>
<dbReference type="EC" id="3.5.1.-" evidence="2"/>
<dbReference type="EMBL" id="AF157500">
    <property type="protein sequence ID" value="AAD39551.1"/>
    <property type="molecule type" value="mRNA"/>
</dbReference>
<dbReference type="EMBL" id="AK075666">
    <property type="protein sequence ID" value="BAC35884.1"/>
    <property type="molecule type" value="mRNA"/>
</dbReference>
<dbReference type="EMBL" id="BC003204">
    <property type="protein sequence ID" value="AAH03204.1"/>
    <property type="molecule type" value="mRNA"/>
</dbReference>
<dbReference type="CCDS" id="CCDS22262.1"/>
<dbReference type="RefSeq" id="NP_062708.1">
    <property type="nucleotide sequence ID" value="NM_019734.3"/>
</dbReference>
<dbReference type="RefSeq" id="XP_017168016.1">
    <property type="nucleotide sequence ID" value="XM_017312527.2"/>
</dbReference>
<dbReference type="RefSeq" id="XP_017168017.1">
    <property type="nucleotide sequence ID" value="XM_017312528.2"/>
</dbReference>
<dbReference type="RefSeq" id="XP_017168018.1">
    <property type="nucleotide sequence ID" value="XM_017312529.1"/>
</dbReference>
<dbReference type="RefSeq" id="XP_017168019.1">
    <property type="nucleotide sequence ID" value="XM_017312530.2"/>
</dbReference>
<dbReference type="RefSeq" id="XP_017168020.1">
    <property type="nucleotide sequence ID" value="XM_017312531.2"/>
</dbReference>
<dbReference type="RefSeq" id="XP_017168021.1">
    <property type="nucleotide sequence ID" value="XM_017312532.2"/>
</dbReference>
<dbReference type="RefSeq" id="XP_030099113.1">
    <property type="nucleotide sequence ID" value="XM_030243253.1"/>
</dbReference>
<dbReference type="SMR" id="Q9WV54"/>
<dbReference type="BioGRID" id="198219">
    <property type="interactions" value="12"/>
</dbReference>
<dbReference type="FunCoup" id="Q9WV54">
    <property type="interactions" value="1416"/>
</dbReference>
<dbReference type="IntAct" id="Q9WV54">
    <property type="interactions" value="1"/>
</dbReference>
<dbReference type="STRING" id="10090.ENSMUSP00000034000"/>
<dbReference type="MEROPS" id="C89.001"/>
<dbReference type="GlyConnect" id="2101">
    <property type="glycosylation" value="8 N-Linked glycans (3 sites)"/>
</dbReference>
<dbReference type="GlyCosmos" id="Q9WV54">
    <property type="glycosylation" value="5 sites, 8 glycans"/>
</dbReference>
<dbReference type="GlyGen" id="Q9WV54">
    <property type="glycosylation" value="6 sites, 11 N-linked glycans (4 sites), 1 O-linked glycan (1 site)"/>
</dbReference>
<dbReference type="iPTMnet" id="Q9WV54"/>
<dbReference type="PhosphoSitePlus" id="Q9WV54"/>
<dbReference type="SwissPalm" id="Q9WV54"/>
<dbReference type="jPOST" id="Q9WV54"/>
<dbReference type="PaxDb" id="10090-ENSMUSP00000034000"/>
<dbReference type="PeptideAtlas" id="Q9WV54"/>
<dbReference type="ProteomicsDB" id="277243"/>
<dbReference type="Pumba" id="Q9WV54"/>
<dbReference type="Antibodypedia" id="1611">
    <property type="antibodies" value="304 antibodies from 31 providers"/>
</dbReference>
<dbReference type="DNASU" id="11886"/>
<dbReference type="Ensembl" id="ENSMUST00000034000.15">
    <property type="protein sequence ID" value="ENSMUSP00000034000.9"/>
    <property type="gene ID" value="ENSMUSG00000031591.15"/>
</dbReference>
<dbReference type="GeneID" id="11886"/>
<dbReference type="KEGG" id="mmu:11886"/>
<dbReference type="UCSC" id="uc009lnw.2">
    <property type="organism name" value="mouse"/>
</dbReference>
<dbReference type="AGR" id="MGI:1277124"/>
<dbReference type="CTD" id="427"/>
<dbReference type="MGI" id="MGI:1277124">
    <property type="gene designation" value="Asah1"/>
</dbReference>
<dbReference type="VEuPathDB" id="HostDB:ENSMUSG00000031591"/>
<dbReference type="eggNOG" id="ENOG502QVBG">
    <property type="taxonomic scope" value="Eukaryota"/>
</dbReference>
<dbReference type="GeneTree" id="ENSGT00530000063548"/>
<dbReference type="HOGENOM" id="CLU_054401_0_0_1"/>
<dbReference type="InParanoid" id="Q9WV54"/>
<dbReference type="OMA" id="GWWMSFL"/>
<dbReference type="OrthoDB" id="5273684at2759"/>
<dbReference type="PhylomeDB" id="Q9WV54"/>
<dbReference type="TreeFam" id="TF313219"/>
<dbReference type="BRENDA" id="3.5.1.23">
    <property type="organism ID" value="3474"/>
</dbReference>
<dbReference type="Reactome" id="R-MMU-6798695">
    <property type="pathway name" value="Neutrophil degranulation"/>
</dbReference>
<dbReference type="Reactome" id="R-MMU-9840310">
    <property type="pathway name" value="Glycosphingolipid catabolism"/>
</dbReference>
<dbReference type="UniPathway" id="UPA00222"/>
<dbReference type="BioGRID-ORCS" id="11886">
    <property type="hits" value="3 hits in 80 CRISPR screens"/>
</dbReference>
<dbReference type="ChiTaRS" id="Asah1">
    <property type="organism name" value="mouse"/>
</dbReference>
<dbReference type="PRO" id="PR:Q9WV54"/>
<dbReference type="Proteomes" id="UP000000589">
    <property type="component" value="Chromosome 8"/>
</dbReference>
<dbReference type="RNAct" id="Q9WV54">
    <property type="molecule type" value="protein"/>
</dbReference>
<dbReference type="Bgee" id="ENSMUSG00000031591">
    <property type="expression patterns" value="Expressed in saccule of membranous labyrinth and 254 other cell types or tissues"/>
</dbReference>
<dbReference type="ExpressionAtlas" id="Q9WV54">
    <property type="expression patterns" value="baseline and differential"/>
</dbReference>
<dbReference type="GO" id="GO:0005615">
    <property type="term" value="C:extracellular space"/>
    <property type="evidence" value="ECO:0000250"/>
    <property type="project" value="UniProtKB"/>
</dbReference>
<dbReference type="GO" id="GO:0005764">
    <property type="term" value="C:lysosome"/>
    <property type="evidence" value="ECO:0000250"/>
    <property type="project" value="UniProtKB"/>
</dbReference>
<dbReference type="GO" id="GO:0016020">
    <property type="term" value="C:membrane"/>
    <property type="evidence" value="ECO:0007669"/>
    <property type="project" value="GOC"/>
</dbReference>
<dbReference type="GO" id="GO:0005634">
    <property type="term" value="C:nucleus"/>
    <property type="evidence" value="ECO:0000314"/>
    <property type="project" value="UniProtKB"/>
</dbReference>
<dbReference type="GO" id="GO:0017064">
    <property type="term" value="F:fatty acid amide hydrolase activity"/>
    <property type="evidence" value="ECO:0007669"/>
    <property type="project" value="InterPro"/>
</dbReference>
<dbReference type="GO" id="GO:0017040">
    <property type="term" value="F:N-acylsphingosine amidohydrolase activity"/>
    <property type="evidence" value="ECO:0000314"/>
    <property type="project" value="MGI"/>
</dbReference>
<dbReference type="GO" id="GO:0071356">
    <property type="term" value="P:cellular response to tumor necrosis factor"/>
    <property type="evidence" value="ECO:0000314"/>
    <property type="project" value="UniProtKB"/>
</dbReference>
<dbReference type="GO" id="GO:0046513">
    <property type="term" value="P:ceramide biosynthetic process"/>
    <property type="evidence" value="ECO:0000250"/>
    <property type="project" value="UniProtKB"/>
</dbReference>
<dbReference type="GO" id="GO:0046514">
    <property type="term" value="P:ceramide catabolic process"/>
    <property type="evidence" value="ECO:0000314"/>
    <property type="project" value="UniProtKB"/>
</dbReference>
<dbReference type="GO" id="GO:0006631">
    <property type="term" value="P:fatty acid metabolic process"/>
    <property type="evidence" value="ECO:0007669"/>
    <property type="project" value="InterPro"/>
</dbReference>
<dbReference type="GO" id="GO:0030216">
    <property type="term" value="P:keratinocyte differentiation"/>
    <property type="evidence" value="ECO:0000250"/>
    <property type="project" value="UniProtKB"/>
</dbReference>
<dbReference type="GO" id="GO:0062098">
    <property type="term" value="P:regulation of programmed necrotic cell death"/>
    <property type="evidence" value="ECO:0000315"/>
    <property type="project" value="UniProtKB"/>
</dbReference>
<dbReference type="GO" id="GO:0050810">
    <property type="term" value="P:regulation of steroid biosynthetic process"/>
    <property type="evidence" value="ECO:0000250"/>
    <property type="project" value="UniProtKB"/>
</dbReference>
<dbReference type="GO" id="GO:0046512">
    <property type="term" value="P:sphingosine biosynthetic process"/>
    <property type="evidence" value="ECO:0000314"/>
    <property type="project" value="UniProtKB"/>
</dbReference>
<dbReference type="CDD" id="cd01903">
    <property type="entry name" value="Ntn_AC_NAAA"/>
    <property type="match status" value="1"/>
</dbReference>
<dbReference type="FunFam" id="3.60.60.10:FF:000002">
    <property type="entry name" value="N-acylsphingosine amidohydrolase 1"/>
    <property type="match status" value="1"/>
</dbReference>
<dbReference type="Gene3D" id="3.60.60.10">
    <property type="entry name" value="Penicillin V Acylase, Chain A"/>
    <property type="match status" value="1"/>
</dbReference>
<dbReference type="InterPro" id="IPR016699">
    <property type="entry name" value="Acid_ceramidase-like"/>
</dbReference>
<dbReference type="InterPro" id="IPR029130">
    <property type="entry name" value="Acid_ceramidase_N"/>
</dbReference>
<dbReference type="InterPro" id="IPR029132">
    <property type="entry name" value="CBAH/NAAA_C"/>
</dbReference>
<dbReference type="PANTHER" id="PTHR28583">
    <property type="entry name" value="ACID AMIDASE"/>
    <property type="match status" value="1"/>
</dbReference>
<dbReference type="PANTHER" id="PTHR28583:SF1">
    <property type="entry name" value="ACID CERAMIDASE"/>
    <property type="match status" value="1"/>
</dbReference>
<dbReference type="Pfam" id="PF02275">
    <property type="entry name" value="CBAH"/>
    <property type="match status" value="1"/>
</dbReference>
<dbReference type="Pfam" id="PF15508">
    <property type="entry name" value="NAAA-beta"/>
    <property type="match status" value="1"/>
</dbReference>
<dbReference type="PIRSF" id="PIRSF017632">
    <property type="entry name" value="Acid_ceramidase-like"/>
    <property type="match status" value="1"/>
</dbReference>
<keyword id="KW-1015">Disulfide bond</keyword>
<keyword id="KW-0325">Glycoprotein</keyword>
<keyword id="KW-0378">Hydrolase</keyword>
<keyword id="KW-0443">Lipid metabolism</keyword>
<keyword id="KW-0458">Lysosome</keyword>
<keyword id="KW-1185">Reference proteome</keyword>
<keyword id="KW-0964">Secreted</keyword>
<keyword id="KW-0732">Signal</keyword>
<keyword id="KW-0746">Sphingolipid metabolism</keyword>
<keyword id="KW-0865">Zymogen</keyword>
<reference key="1">
    <citation type="journal article" date="1998" name="Genomics">
        <title>Cloning and characterization of the full-length cDNA and genomic sequences encoding murine acid ceramidase.</title>
        <authorList>
            <person name="Li C.-M."/>
            <person name="Hong S.-B."/>
            <person name="Kopal G."/>
            <person name="He X."/>
            <person name="Linke T."/>
            <person name="Hou W.-S."/>
            <person name="Koch J."/>
            <person name="Gatt S."/>
            <person name="Sandhoff K."/>
            <person name="Schuchman E.H."/>
        </authorList>
    </citation>
    <scope>NUCLEOTIDE SEQUENCE [MRNA]</scope>
    <scope>FUNCTION</scope>
    <scope>CATALYTIC ACTIVITY</scope>
    <scope>PATHWAY</scope>
    <scope>TISSUE SPECIFICITY</scope>
    <source>
        <strain>ICR</strain>
        <tissue>Brain</tissue>
    </source>
</reference>
<reference key="2">
    <citation type="journal article" date="2005" name="Science">
        <title>The transcriptional landscape of the mammalian genome.</title>
        <authorList>
            <person name="Carninci P."/>
            <person name="Kasukawa T."/>
            <person name="Katayama S."/>
            <person name="Gough J."/>
            <person name="Frith M.C."/>
            <person name="Maeda N."/>
            <person name="Oyama R."/>
            <person name="Ravasi T."/>
            <person name="Lenhard B."/>
            <person name="Wells C."/>
            <person name="Kodzius R."/>
            <person name="Shimokawa K."/>
            <person name="Bajic V.B."/>
            <person name="Brenner S.E."/>
            <person name="Batalov S."/>
            <person name="Forrest A.R."/>
            <person name="Zavolan M."/>
            <person name="Davis M.J."/>
            <person name="Wilming L.G."/>
            <person name="Aidinis V."/>
            <person name="Allen J.E."/>
            <person name="Ambesi-Impiombato A."/>
            <person name="Apweiler R."/>
            <person name="Aturaliya R.N."/>
            <person name="Bailey T.L."/>
            <person name="Bansal M."/>
            <person name="Baxter L."/>
            <person name="Beisel K.W."/>
            <person name="Bersano T."/>
            <person name="Bono H."/>
            <person name="Chalk A.M."/>
            <person name="Chiu K.P."/>
            <person name="Choudhary V."/>
            <person name="Christoffels A."/>
            <person name="Clutterbuck D.R."/>
            <person name="Crowe M.L."/>
            <person name="Dalla E."/>
            <person name="Dalrymple B.P."/>
            <person name="de Bono B."/>
            <person name="Della Gatta G."/>
            <person name="di Bernardo D."/>
            <person name="Down T."/>
            <person name="Engstrom P."/>
            <person name="Fagiolini M."/>
            <person name="Faulkner G."/>
            <person name="Fletcher C.F."/>
            <person name="Fukushima T."/>
            <person name="Furuno M."/>
            <person name="Futaki S."/>
            <person name="Gariboldi M."/>
            <person name="Georgii-Hemming P."/>
            <person name="Gingeras T.R."/>
            <person name="Gojobori T."/>
            <person name="Green R.E."/>
            <person name="Gustincich S."/>
            <person name="Harbers M."/>
            <person name="Hayashi Y."/>
            <person name="Hensch T.K."/>
            <person name="Hirokawa N."/>
            <person name="Hill D."/>
            <person name="Huminiecki L."/>
            <person name="Iacono M."/>
            <person name="Ikeo K."/>
            <person name="Iwama A."/>
            <person name="Ishikawa T."/>
            <person name="Jakt M."/>
            <person name="Kanapin A."/>
            <person name="Katoh M."/>
            <person name="Kawasawa Y."/>
            <person name="Kelso J."/>
            <person name="Kitamura H."/>
            <person name="Kitano H."/>
            <person name="Kollias G."/>
            <person name="Krishnan S.P."/>
            <person name="Kruger A."/>
            <person name="Kummerfeld S.K."/>
            <person name="Kurochkin I.V."/>
            <person name="Lareau L.F."/>
            <person name="Lazarevic D."/>
            <person name="Lipovich L."/>
            <person name="Liu J."/>
            <person name="Liuni S."/>
            <person name="McWilliam S."/>
            <person name="Madan Babu M."/>
            <person name="Madera M."/>
            <person name="Marchionni L."/>
            <person name="Matsuda H."/>
            <person name="Matsuzawa S."/>
            <person name="Miki H."/>
            <person name="Mignone F."/>
            <person name="Miyake S."/>
            <person name="Morris K."/>
            <person name="Mottagui-Tabar S."/>
            <person name="Mulder N."/>
            <person name="Nakano N."/>
            <person name="Nakauchi H."/>
            <person name="Ng P."/>
            <person name="Nilsson R."/>
            <person name="Nishiguchi S."/>
            <person name="Nishikawa S."/>
            <person name="Nori F."/>
            <person name="Ohara O."/>
            <person name="Okazaki Y."/>
            <person name="Orlando V."/>
            <person name="Pang K.C."/>
            <person name="Pavan W.J."/>
            <person name="Pavesi G."/>
            <person name="Pesole G."/>
            <person name="Petrovsky N."/>
            <person name="Piazza S."/>
            <person name="Reed J."/>
            <person name="Reid J.F."/>
            <person name="Ring B.Z."/>
            <person name="Ringwald M."/>
            <person name="Rost B."/>
            <person name="Ruan Y."/>
            <person name="Salzberg S.L."/>
            <person name="Sandelin A."/>
            <person name="Schneider C."/>
            <person name="Schoenbach C."/>
            <person name="Sekiguchi K."/>
            <person name="Semple C.A."/>
            <person name="Seno S."/>
            <person name="Sessa L."/>
            <person name="Sheng Y."/>
            <person name="Shibata Y."/>
            <person name="Shimada H."/>
            <person name="Shimada K."/>
            <person name="Silva D."/>
            <person name="Sinclair B."/>
            <person name="Sperling S."/>
            <person name="Stupka E."/>
            <person name="Sugiura K."/>
            <person name="Sultana R."/>
            <person name="Takenaka Y."/>
            <person name="Taki K."/>
            <person name="Tammoja K."/>
            <person name="Tan S.L."/>
            <person name="Tang S."/>
            <person name="Taylor M.S."/>
            <person name="Tegner J."/>
            <person name="Teichmann S.A."/>
            <person name="Ueda H.R."/>
            <person name="van Nimwegen E."/>
            <person name="Verardo R."/>
            <person name="Wei C.L."/>
            <person name="Yagi K."/>
            <person name="Yamanishi H."/>
            <person name="Zabarovsky E."/>
            <person name="Zhu S."/>
            <person name="Zimmer A."/>
            <person name="Hide W."/>
            <person name="Bult C."/>
            <person name="Grimmond S.M."/>
            <person name="Teasdale R.D."/>
            <person name="Liu E.T."/>
            <person name="Brusic V."/>
            <person name="Quackenbush J."/>
            <person name="Wahlestedt C."/>
            <person name="Mattick J.S."/>
            <person name="Hume D.A."/>
            <person name="Kai C."/>
            <person name="Sasaki D."/>
            <person name="Tomaru Y."/>
            <person name="Fukuda S."/>
            <person name="Kanamori-Katayama M."/>
            <person name="Suzuki M."/>
            <person name="Aoki J."/>
            <person name="Arakawa T."/>
            <person name="Iida J."/>
            <person name="Imamura K."/>
            <person name="Itoh M."/>
            <person name="Kato T."/>
            <person name="Kawaji H."/>
            <person name="Kawagashira N."/>
            <person name="Kawashima T."/>
            <person name="Kojima M."/>
            <person name="Kondo S."/>
            <person name="Konno H."/>
            <person name="Nakano K."/>
            <person name="Ninomiya N."/>
            <person name="Nishio T."/>
            <person name="Okada M."/>
            <person name="Plessy C."/>
            <person name="Shibata K."/>
            <person name="Shiraki T."/>
            <person name="Suzuki S."/>
            <person name="Tagami M."/>
            <person name="Waki K."/>
            <person name="Watahiki A."/>
            <person name="Okamura-Oho Y."/>
            <person name="Suzuki H."/>
            <person name="Kawai J."/>
            <person name="Hayashizaki Y."/>
        </authorList>
    </citation>
    <scope>NUCLEOTIDE SEQUENCE [LARGE SCALE MRNA]</scope>
    <source>
        <strain>C57BL/6J</strain>
    </source>
</reference>
<reference key="3">
    <citation type="journal article" date="2004" name="Genome Res.">
        <title>The status, quality, and expansion of the NIH full-length cDNA project: the Mammalian Gene Collection (MGC).</title>
        <authorList>
            <consortium name="The MGC Project Team"/>
        </authorList>
    </citation>
    <scope>NUCLEOTIDE SEQUENCE [LARGE SCALE MRNA]</scope>
    <source>
        <strain>Czech II</strain>
        <tissue>Mammary gland</tissue>
    </source>
</reference>
<reference key="4">
    <citation type="journal article" date="2000" name="J. Exp. Med.">
        <title>Overexpression of acid ceramidase protects from tumor necrosis factor-induced cell death.</title>
        <authorList>
            <person name="Strelow A."/>
            <person name="Bernardo K."/>
            <person name="Adam-Klages S."/>
            <person name="Linke T."/>
            <person name="Sandhoff K."/>
            <person name="Kroenke M."/>
            <person name="Adam D."/>
        </authorList>
    </citation>
    <scope>FUNCTION</scope>
</reference>
<reference key="5">
    <citation type="journal article" date="2002" name="Genomics">
        <title>Insertional mutagenesis of the mouse acid ceramidase gene leads to early embryonic lethality in homozygotes and progressive lipid storage disease in heterozygotes.</title>
        <authorList>
            <person name="Li C.M."/>
            <person name="Park J.H."/>
            <person name="Simonaro C.M."/>
            <person name="He X."/>
            <person name="Gordon R.E."/>
            <person name="Friedman A.H."/>
            <person name="Ehleiter D."/>
            <person name="Paris F."/>
            <person name="Manova K."/>
            <person name="Hepbildikler S."/>
            <person name="Fuks Z."/>
            <person name="Sandhoff K."/>
            <person name="Kolesnick R."/>
            <person name="Schuchman E.H."/>
            <person name="Hepbiloikler S."/>
        </authorList>
    </citation>
    <scope>FUNCTION</scope>
    <scope>DISRUPTION PHENOTYPE</scope>
</reference>
<reference key="6">
    <citation type="journal article" date="2009" name="Nat. Biotechnol.">
        <title>Mass-spectrometric identification and relative quantification of N-linked cell surface glycoproteins.</title>
        <authorList>
            <person name="Wollscheid B."/>
            <person name="Bausch-Fluck D."/>
            <person name="Henderson C."/>
            <person name="O'Brien R."/>
            <person name="Bibel M."/>
            <person name="Schiess R."/>
            <person name="Aebersold R."/>
            <person name="Watts J.D."/>
        </authorList>
    </citation>
    <scope>GLYCOSYLATION [LARGE SCALE ANALYSIS] AT ASN-258</scope>
</reference>
<reference key="7">
    <citation type="journal article" date="2010" name="Cell">
        <title>A tissue-specific atlas of mouse protein phosphorylation and expression.</title>
        <authorList>
            <person name="Huttlin E.L."/>
            <person name="Jedrychowski M.P."/>
            <person name="Elias J.E."/>
            <person name="Goswami T."/>
            <person name="Rad R."/>
            <person name="Beausoleil S.A."/>
            <person name="Villen J."/>
            <person name="Haas W."/>
            <person name="Sowa M.E."/>
            <person name="Gygi S.P."/>
        </authorList>
    </citation>
    <scope>IDENTIFICATION BY MASS SPECTROMETRY [LARGE SCALE ANALYSIS]</scope>
    <source>
        <tissue>Brain</tissue>
        <tissue>Brown adipose tissue</tissue>
        <tissue>Kidney</tissue>
        <tissue>Liver</tissue>
        <tissue>Lung</tissue>
        <tissue>Pancreas</tissue>
        <tissue>Spleen</tissue>
        <tissue>Testis</tissue>
    </source>
</reference>
<reference key="8">
    <citation type="journal article" date="2013" name="Nat. Med.">
        <title>Acid sphingomyelinase-ceramide system mediates effects of antidepressant drugs.</title>
        <authorList>
            <person name="Gulbins E."/>
            <person name="Palmada M."/>
            <person name="Reichel M."/>
            <person name="Lueth A."/>
            <person name="Boehmer C."/>
            <person name="Amato D."/>
            <person name="Mueller C.P."/>
            <person name="Tischbirek C.H."/>
            <person name="Groemer T.W."/>
            <person name="Tabatabai G."/>
            <person name="Becker K.A."/>
            <person name="Tripal P."/>
            <person name="Staedtler S."/>
            <person name="Ackermann T.F."/>
            <person name="van Brederode J."/>
            <person name="Alzheimer C."/>
            <person name="Weller M."/>
            <person name="Lang U.E."/>
            <person name="Kleuser B."/>
            <person name="Grassme H."/>
            <person name="Kornhuber J."/>
        </authorList>
    </citation>
    <scope>DISRUPTION PHENOTYPE</scope>
    <scope>DEVELOPMENTAL STAGE</scope>
</reference>
<name>ASAH1_MOUSE</name>
<comment type="function">
    <text evidence="2 4 5 8 9">Lysosomal ceramidase that hydrolyzes sphingolipid ceramides into sphingosine and free fatty acids at acidic pH (PubMed:11829492, PubMed:9653654). Ceramides, sphingosine, and its phosphorylated form sphingosine-1-phosphate are bioactive lipids that mediate cellular signaling pathways regulating several biological processes including cell proliferation, apoptosis and differentiation (PubMed:9653654). Has a higher catalytic efficiency towards C12-ceramides versus other ceramides (By similarity). Also catalyzes the reverse reaction allowing the synthesis of ceramides from fatty acids and sphingosine (By similarity). For the reverse synthetic reaction, the natural sphingosine D-erythro isomer is more efficiently utilized as a substrate compared to D-erythro-dihydrosphingosine and D-erythro-phytosphingosine, while the fatty acids with chain lengths of 12 or 14 carbons are the most efficiently used (By similarity). Also has an N-acylethanolamine hydrolase activity (By similarity). By regulating the levels of ceramides, sphingosine and sphingosine-1-phosphate in the epidermis, mediates the calcium-induced differentiation of epidermal keratinocytes (By similarity). Also indirectly regulates tumor necrosis factor/TNF-induced apoptosis (PubMed:10974027). By regulating the intracellular balance between ceramides and sphingosine, in adrenocortical cells, probably also acts as a regulator of steroidogenesis (By similarity).</text>
</comment>
<comment type="catalytic activity">
    <reaction evidence="8">
        <text>an N-acylsphing-4-enine + H2O = sphing-4-enine + a fatty acid</text>
        <dbReference type="Rhea" id="RHEA:20856"/>
        <dbReference type="ChEBI" id="CHEBI:15377"/>
        <dbReference type="ChEBI" id="CHEBI:28868"/>
        <dbReference type="ChEBI" id="CHEBI:52639"/>
        <dbReference type="ChEBI" id="CHEBI:57756"/>
        <dbReference type="EC" id="3.5.1.23"/>
    </reaction>
</comment>
<comment type="catalytic activity">
    <reaction evidence="8">
        <text>N-dodecanoylsphing-4-enine + H2O = dodecanoate + sphing-4-enine</text>
        <dbReference type="Rhea" id="RHEA:41291"/>
        <dbReference type="ChEBI" id="CHEBI:15377"/>
        <dbReference type="ChEBI" id="CHEBI:18262"/>
        <dbReference type="ChEBI" id="CHEBI:57756"/>
        <dbReference type="ChEBI" id="CHEBI:72956"/>
    </reaction>
    <physiologicalReaction direction="left-to-right" evidence="2">
        <dbReference type="Rhea" id="RHEA:41292"/>
    </physiologicalReaction>
    <physiologicalReaction direction="right-to-left" evidence="2">
        <dbReference type="Rhea" id="RHEA:41293"/>
    </physiologicalReaction>
</comment>
<comment type="catalytic activity">
    <reaction evidence="8">
        <text>N-(9Z-octadecenoyl)-sphing-4-enine + H2O = sphing-4-enine + (9Z)-octadecenoate</text>
        <dbReference type="Rhea" id="RHEA:41299"/>
        <dbReference type="ChEBI" id="CHEBI:15377"/>
        <dbReference type="ChEBI" id="CHEBI:30823"/>
        <dbReference type="ChEBI" id="CHEBI:57756"/>
        <dbReference type="ChEBI" id="CHEBI:77996"/>
    </reaction>
    <physiologicalReaction direction="left-to-right" evidence="2">
        <dbReference type="Rhea" id="RHEA:41300"/>
    </physiologicalReaction>
</comment>
<comment type="catalytic activity">
    <reaction evidence="2">
        <text>N-tetradecanoylsphing-4-enine + H2O = tetradecanoate + sphing-4-enine</text>
        <dbReference type="Rhea" id="RHEA:41287"/>
        <dbReference type="ChEBI" id="CHEBI:15377"/>
        <dbReference type="ChEBI" id="CHEBI:30807"/>
        <dbReference type="ChEBI" id="CHEBI:57756"/>
        <dbReference type="ChEBI" id="CHEBI:72957"/>
    </reaction>
    <physiologicalReaction direction="right-to-left" evidence="2">
        <dbReference type="Rhea" id="RHEA:41289"/>
    </physiologicalReaction>
</comment>
<comment type="catalytic activity">
    <reaction evidence="2">
        <text>N-hexadecanoylsphing-4-enine + H2O = sphing-4-enine + hexadecanoate</text>
        <dbReference type="Rhea" id="RHEA:38891"/>
        <dbReference type="ChEBI" id="CHEBI:7896"/>
        <dbReference type="ChEBI" id="CHEBI:15377"/>
        <dbReference type="ChEBI" id="CHEBI:57756"/>
        <dbReference type="ChEBI" id="CHEBI:72959"/>
    </reaction>
    <physiologicalReaction direction="left-to-right" evidence="2">
        <dbReference type="Rhea" id="RHEA:38892"/>
    </physiologicalReaction>
    <physiologicalReaction direction="right-to-left" evidence="2">
        <dbReference type="Rhea" id="RHEA:38893"/>
    </physiologicalReaction>
</comment>
<comment type="catalytic activity">
    <reaction evidence="2">
        <text>N-octadecanoylsphing-4-enine + H2O = sphing-4-enine + octadecanoate</text>
        <dbReference type="Rhea" id="RHEA:41279"/>
        <dbReference type="ChEBI" id="CHEBI:15377"/>
        <dbReference type="ChEBI" id="CHEBI:25629"/>
        <dbReference type="ChEBI" id="CHEBI:57756"/>
        <dbReference type="ChEBI" id="CHEBI:72961"/>
    </reaction>
    <physiologicalReaction direction="left-to-right" evidence="2">
        <dbReference type="Rhea" id="RHEA:41280"/>
    </physiologicalReaction>
    <physiologicalReaction direction="right-to-left" evidence="2">
        <dbReference type="Rhea" id="RHEA:41281"/>
    </physiologicalReaction>
</comment>
<comment type="catalytic activity">
    <reaction evidence="2">
        <text>N-dodecanoyl-(4R)-hydroxysphinganine + H2O = (4R)-hydroxysphinganine + dodecanoate</text>
        <dbReference type="Rhea" id="RHEA:41303"/>
        <dbReference type="ChEBI" id="CHEBI:15377"/>
        <dbReference type="ChEBI" id="CHEBI:18262"/>
        <dbReference type="ChEBI" id="CHEBI:64124"/>
        <dbReference type="ChEBI" id="CHEBI:78001"/>
    </reaction>
    <physiologicalReaction direction="right-to-left" evidence="2">
        <dbReference type="Rhea" id="RHEA:41305"/>
    </physiologicalReaction>
</comment>
<comment type="catalytic activity">
    <reaction evidence="2">
        <text>N-(dodecanoyl)-sphinganine + H2O = dodecanoate + sphinganine</text>
        <dbReference type="Rhea" id="RHEA:45448"/>
        <dbReference type="ChEBI" id="CHEBI:15377"/>
        <dbReference type="ChEBI" id="CHEBI:18262"/>
        <dbReference type="ChEBI" id="CHEBI:57817"/>
        <dbReference type="ChEBI" id="CHEBI:85261"/>
    </reaction>
    <physiologicalReaction direction="right-to-left" evidence="2">
        <dbReference type="Rhea" id="RHEA:45450"/>
    </physiologicalReaction>
</comment>
<comment type="catalytic activity">
    <reaction evidence="2">
        <text>N-(acetyl)-sphing-4-enine + H2O = sphing-4-enine + acetate</text>
        <dbReference type="Rhea" id="RHEA:58484"/>
        <dbReference type="ChEBI" id="CHEBI:15377"/>
        <dbReference type="ChEBI" id="CHEBI:30089"/>
        <dbReference type="ChEBI" id="CHEBI:46979"/>
        <dbReference type="ChEBI" id="CHEBI:57756"/>
    </reaction>
    <physiologicalReaction direction="left-to-right" evidence="2">
        <dbReference type="Rhea" id="RHEA:58485"/>
    </physiologicalReaction>
</comment>
<comment type="catalytic activity">
    <reaction evidence="2">
        <text>N-(hexanoyl)sphing-4-enine + H2O = hexanoate + sphing-4-enine</text>
        <dbReference type="Rhea" id="RHEA:41295"/>
        <dbReference type="ChEBI" id="CHEBI:15377"/>
        <dbReference type="ChEBI" id="CHEBI:17120"/>
        <dbReference type="ChEBI" id="CHEBI:57756"/>
        <dbReference type="ChEBI" id="CHEBI:63867"/>
    </reaction>
    <physiologicalReaction direction="left-to-right" evidence="2">
        <dbReference type="Rhea" id="RHEA:41296"/>
    </physiologicalReaction>
</comment>
<comment type="catalytic activity">
    <reaction evidence="2">
        <text>N-octanoylsphing-4-enine + H2O = octanoate + sphing-4-enine</text>
        <dbReference type="Rhea" id="RHEA:45092"/>
        <dbReference type="ChEBI" id="CHEBI:15377"/>
        <dbReference type="ChEBI" id="CHEBI:25646"/>
        <dbReference type="ChEBI" id="CHEBI:45815"/>
        <dbReference type="ChEBI" id="CHEBI:57756"/>
    </reaction>
    <physiologicalReaction direction="left-to-right" evidence="2">
        <dbReference type="Rhea" id="RHEA:45093"/>
    </physiologicalReaction>
</comment>
<comment type="catalytic activity">
    <reaction evidence="2">
        <text>N-dodecanoylethanolamine + H2O = dodecanoate + ethanolamine</text>
        <dbReference type="Rhea" id="RHEA:45456"/>
        <dbReference type="ChEBI" id="CHEBI:15377"/>
        <dbReference type="ChEBI" id="CHEBI:18262"/>
        <dbReference type="ChEBI" id="CHEBI:57603"/>
        <dbReference type="ChEBI" id="CHEBI:85263"/>
    </reaction>
    <physiologicalReaction direction="left-to-right" evidence="2">
        <dbReference type="Rhea" id="RHEA:45457"/>
    </physiologicalReaction>
</comment>
<comment type="pathway">
    <text evidence="8">Lipid metabolism; sphingolipid metabolism.</text>
</comment>
<comment type="subunit">
    <text evidence="2">Heterodimer; disulfide-linked. The heterodimer is composed of the disulfide-linked alpha and beta chains produced by autocatalytic cleavage of the precursor.</text>
</comment>
<comment type="subcellular location">
    <subcellularLocation>
        <location evidence="2">Lysosome</location>
    </subcellularLocation>
    <subcellularLocation>
        <location evidence="2">Secreted</location>
    </subcellularLocation>
    <text evidence="2">Secretion is extremely low and localization to lysosomes is mannose-6-phosphate receptor-dependent.</text>
</comment>
<comment type="tissue specificity">
    <text evidence="8">Widely expressed.</text>
</comment>
<comment type="developmental stage">
    <text evidence="7">Expression is detected from 7 dpc to 17 dpc, during fetal development.</text>
</comment>
<comment type="PTM">
    <text evidence="2">N-glycosylated.</text>
</comment>
<comment type="PTM">
    <text evidence="2">Proteolytically cleaved into two chains alpha and beta that remain associated via a disulfide bond. Cleavage gives rise to a conformation change that activates the enzyme. The same catalytic Cys residue mediates the autoproteolytic cleavage and subsequent hydrolysis of lipid substrates. The beta chain may undergo an additional C-terminal processing.</text>
</comment>
<comment type="disruption phenotype">
    <text evidence="5 7">Lethal for homozygous knockout embryos (PubMed:11829492). Heterozygous knockout mice are viable, grow normally and do not present overt clinical phenotype (PubMed:11829492). However, they progressively develop lipid storage-associated phenotypes, with an elevation of ceramides levels and an accumulation of lipid-laden inclusions in liver, more specifically in Kupffer cells, and other tissues (PubMed:11829492). Associated with the accumulation of ceramides, a depression-like phenotype is observed for heterozygous knockout mice (PubMed:23770692).</text>
</comment>
<comment type="similarity">
    <text evidence="10">Belongs to the acid ceramidase family.</text>
</comment>
<protein>
    <recommendedName>
        <fullName evidence="10">Acid ceramidase</fullName>
        <shortName>AC</shortName>
        <shortName>ACDase</shortName>
        <shortName>Acid CDase</shortName>
        <ecNumber evidence="8">3.5.1.23</ecNumber>
    </recommendedName>
    <alternativeName>
        <fullName>Acylsphingosine deacylase</fullName>
    </alternativeName>
    <alternativeName>
        <fullName evidence="2">N-acylethanolamine hydrolase ASAH1</fullName>
        <ecNumber evidence="2">3.5.1.-</ecNumber>
    </alternativeName>
    <alternativeName>
        <fullName>N-acylsphingosine amidohydrolase</fullName>
    </alternativeName>
    <component>
        <recommendedName>
            <fullName evidence="2">Acid ceramidase subunit alpha</fullName>
        </recommendedName>
    </component>
    <component>
        <recommendedName>
            <fullName evidence="2">Acid ceramidase subunit beta</fullName>
        </recommendedName>
    </component>
</protein>
<sequence>MRGQSLLTWVLAAAVTCAQAQDVPPWTEDCRKSTYPPSGPTYRGPVPWHTINLDLPPYKRWHELLAQKAPALRILVNSITSLVNTFVPSGKLMKMVDQKLPGMIGSLPDPFGEEMRGIADVTGIPLGEIISFNIFYELFTMCTSIITEDEKGHLLHGRNMDFGIFLGWNINNNTWVVTEELKPLTVNLDFQRNNKTVFKATSFVGYVGMLTGFKPGLFSLSLNERFSINGGYLGILEWMFGRKDAQWVGFITRSVLENTTSYEEAKNTLTKTKIMAPVYFILGGKKSGEGCVITRERKESLDVYELDPKHGRWYVVQTNYDRWKNTLFIDDRRTPAKKCLNHTTQKNLSFATIYDVLSTKPVLNKLTVFTTLMDVTKGQFESHLRDCPDPCIGW</sequence>
<feature type="signal peptide" evidence="3">
    <location>
        <begin position="1"/>
        <end position="18"/>
    </location>
</feature>
<feature type="chain" id="PRO_0000002316" description="Acid ceramidase subunit alpha" evidence="2">
    <location>
        <begin position="19"/>
        <end position="141"/>
    </location>
</feature>
<feature type="chain" id="PRO_0000002317" description="Acid ceramidase subunit beta" evidence="2">
    <location>
        <begin position="142"/>
        <end position="394"/>
    </location>
</feature>
<feature type="active site" description="Nucleophile" evidence="2">
    <location>
        <position position="142"/>
    </location>
</feature>
<feature type="site" description="Important for catalytic activity" evidence="2">
    <location>
        <position position="161"/>
    </location>
</feature>
<feature type="site" description="Important for catalytic activity" evidence="2">
    <location>
        <position position="319"/>
    </location>
</feature>
<feature type="site" description="Important for catalytic activity" evidence="2">
    <location>
        <position position="332"/>
    </location>
</feature>
<feature type="glycosylation site" description="N-linked (GlcNAc...) asparagine" evidence="3">
    <location>
        <position position="172"/>
    </location>
</feature>
<feature type="glycosylation site" description="N-linked (GlcNAc...) asparagine" evidence="3">
    <location>
        <position position="194"/>
    </location>
</feature>
<feature type="glycosylation site" description="N-linked (GlcNAc...) asparagine" evidence="6">
    <location>
        <position position="258"/>
    </location>
</feature>
<feature type="glycosylation site" description="N-linked (GlcNAc...) asparagine" evidence="3">
    <location>
        <position position="341"/>
    </location>
</feature>
<feature type="glycosylation site" description="N-linked (GlcNAc...) asparagine" evidence="3">
    <location>
        <position position="347"/>
    </location>
</feature>
<feature type="disulfide bond" description="Interchain (between alpha and beta subunits)" evidence="2">
    <location>
        <begin position="30"/>
        <end position="339"/>
    </location>
</feature>
<feature type="disulfide bond" evidence="1">
    <location>
        <begin position="387"/>
        <end position="391"/>
    </location>
</feature>
<evidence type="ECO:0000250" key="1">
    <source>
        <dbReference type="UniProtKB" id="A0A0P6JG37"/>
    </source>
</evidence>
<evidence type="ECO:0000250" key="2">
    <source>
        <dbReference type="UniProtKB" id="Q13510"/>
    </source>
</evidence>
<evidence type="ECO:0000255" key="3"/>
<evidence type="ECO:0000269" key="4">
    <source>
    </source>
</evidence>
<evidence type="ECO:0000269" key="5">
    <source>
    </source>
</evidence>
<evidence type="ECO:0000269" key="6">
    <source>
    </source>
</evidence>
<evidence type="ECO:0000269" key="7">
    <source>
    </source>
</evidence>
<evidence type="ECO:0000269" key="8">
    <source>
    </source>
</evidence>
<evidence type="ECO:0000303" key="9">
    <source>
    </source>
</evidence>
<evidence type="ECO:0000305" key="10"/>
<evidence type="ECO:0000312" key="11">
    <source>
        <dbReference type="MGI" id="MGI:1277124"/>
    </source>
</evidence>
<organism>
    <name type="scientific">Mus musculus</name>
    <name type="common">Mouse</name>
    <dbReference type="NCBI Taxonomy" id="10090"/>
    <lineage>
        <taxon>Eukaryota</taxon>
        <taxon>Metazoa</taxon>
        <taxon>Chordata</taxon>
        <taxon>Craniata</taxon>
        <taxon>Vertebrata</taxon>
        <taxon>Euteleostomi</taxon>
        <taxon>Mammalia</taxon>
        <taxon>Eutheria</taxon>
        <taxon>Euarchontoglires</taxon>
        <taxon>Glires</taxon>
        <taxon>Rodentia</taxon>
        <taxon>Myomorpha</taxon>
        <taxon>Muroidea</taxon>
        <taxon>Muridae</taxon>
        <taxon>Murinae</taxon>
        <taxon>Mus</taxon>
        <taxon>Mus</taxon>
    </lineage>
</organism>
<accession>Q9WV54</accession>
<proteinExistence type="evidence at protein level"/>